<proteinExistence type="inferred from homology"/>
<reference key="1">
    <citation type="journal article" date="2001" name="DNA Res.">
        <title>Complete genomic sequence of the filamentous nitrogen-fixing cyanobacterium Anabaena sp. strain PCC 7120.</title>
        <authorList>
            <person name="Kaneko T."/>
            <person name="Nakamura Y."/>
            <person name="Wolk C.P."/>
            <person name="Kuritz T."/>
            <person name="Sasamoto S."/>
            <person name="Watanabe A."/>
            <person name="Iriguchi M."/>
            <person name="Ishikawa A."/>
            <person name="Kawashima K."/>
            <person name="Kimura T."/>
            <person name="Kishida Y."/>
            <person name="Kohara M."/>
            <person name="Matsumoto M."/>
            <person name="Matsuno A."/>
            <person name="Muraki A."/>
            <person name="Nakazaki N."/>
            <person name="Shimpo S."/>
            <person name="Sugimoto M."/>
            <person name="Takazawa M."/>
            <person name="Yamada M."/>
            <person name="Yasuda M."/>
            <person name="Tabata S."/>
        </authorList>
    </citation>
    <scope>NUCLEOTIDE SEQUENCE [LARGE SCALE GENOMIC DNA]</scope>
    <source>
        <strain>PCC 7120 / SAG 25.82 / UTEX 2576</strain>
    </source>
</reference>
<sequence length="90" mass="9614">MFTIDLSIKNTAFPITVQRKTAEDAEAVYQLILAAIRSGNPDIVELKCEGKTEKKIAVRASEISGVQITQKDGVTTSSGRAPGFFALAGE</sequence>
<feature type="chain" id="PRO_0000240492" description="UPF0367 protein asl4547">
    <location>
        <begin position="1"/>
        <end position="90"/>
    </location>
</feature>
<protein>
    <recommendedName>
        <fullName evidence="1">UPF0367 protein asl4547</fullName>
    </recommendedName>
</protein>
<gene>
    <name type="ordered locus">asl4547</name>
</gene>
<dbReference type="EMBL" id="BA000019">
    <property type="protein sequence ID" value="BAB76246.1"/>
    <property type="molecule type" value="Genomic_DNA"/>
</dbReference>
<dbReference type="PIR" id="AC2374">
    <property type="entry name" value="AC2374"/>
</dbReference>
<dbReference type="RefSeq" id="WP_010998680.1">
    <property type="nucleotide sequence ID" value="NZ_RSCN01000007.1"/>
</dbReference>
<dbReference type="STRING" id="103690.gene:10496597"/>
<dbReference type="KEGG" id="ana:asl4547"/>
<dbReference type="eggNOG" id="ENOG5032YB3">
    <property type="taxonomic scope" value="Bacteria"/>
</dbReference>
<dbReference type="OrthoDB" id="516864at2"/>
<dbReference type="Proteomes" id="UP000002483">
    <property type="component" value="Chromosome"/>
</dbReference>
<dbReference type="HAMAP" id="MF_01360">
    <property type="entry name" value="UPF0367"/>
    <property type="match status" value="1"/>
</dbReference>
<dbReference type="InterPro" id="IPR020885">
    <property type="entry name" value="UPF0367"/>
</dbReference>
<dbReference type="NCBIfam" id="NF010236">
    <property type="entry name" value="PRK13683.1"/>
    <property type="match status" value="1"/>
</dbReference>
<keyword id="KW-1185">Reference proteome</keyword>
<accession>Q8YNL7</accession>
<comment type="similarity">
    <text evidence="1">Belongs to the UPF0367 family.</text>
</comment>
<name>Y4547_NOSS1</name>
<evidence type="ECO:0000255" key="1">
    <source>
        <dbReference type="HAMAP-Rule" id="MF_01360"/>
    </source>
</evidence>
<organism>
    <name type="scientific">Nostoc sp. (strain PCC 7120 / SAG 25.82 / UTEX 2576)</name>
    <dbReference type="NCBI Taxonomy" id="103690"/>
    <lineage>
        <taxon>Bacteria</taxon>
        <taxon>Bacillati</taxon>
        <taxon>Cyanobacteriota</taxon>
        <taxon>Cyanophyceae</taxon>
        <taxon>Nostocales</taxon>
        <taxon>Nostocaceae</taxon>
        <taxon>Nostoc</taxon>
    </lineage>
</organism>